<keyword id="KW-0119">Carbohydrate metabolism</keyword>
<keyword id="KW-0320">Glycogen biosynthesis</keyword>
<keyword id="KW-0321">Glycogen metabolism</keyword>
<keyword id="KW-0328">Glycosyltransferase</keyword>
<keyword id="KW-1185">Reference proteome</keyword>
<keyword id="KW-0808">Transferase</keyword>
<feature type="chain" id="PRO_0000188767" description="1,4-alpha-glucan branching enzyme GlgB 2">
    <location>
        <begin position="1"/>
        <end position="729"/>
    </location>
</feature>
<feature type="active site" description="Nucleophile" evidence="1">
    <location>
        <position position="408"/>
    </location>
</feature>
<feature type="active site" description="Proton donor" evidence="1">
    <location>
        <position position="461"/>
    </location>
</feature>
<comment type="function">
    <text evidence="1">Catalyzes the formation of the alpha-1,6-glucosidic linkages in glycogen by scission of a 1,4-alpha-linked oligosaccharide from growing alpha-1,4-glucan chains and the subsequent attachment of the oligosaccharide to the alpha-1,6 position.</text>
</comment>
<comment type="catalytic activity">
    <reaction>
        <text>Transfers a segment of a (1-&gt;4)-alpha-D-glucan chain to a primary hydroxy group in a similar glucan chain.</text>
        <dbReference type="EC" id="2.4.1.18"/>
    </reaction>
</comment>
<comment type="pathway">
    <text>Glycan biosynthesis; glycogen biosynthesis.</text>
</comment>
<comment type="subunit">
    <text evidence="1">Monomer.</text>
</comment>
<comment type="similarity">
    <text evidence="2">Belongs to the glycosyl hydrolase 13 family. GlgB subfamily.</text>
</comment>
<reference key="1">
    <citation type="journal article" date="2002" name="Nature">
        <title>Comparison of the genomes of two Xanthomonas pathogens with differing host specificities.</title>
        <authorList>
            <person name="da Silva A.C.R."/>
            <person name="Ferro J.A."/>
            <person name="Reinach F.C."/>
            <person name="Farah C.S."/>
            <person name="Furlan L.R."/>
            <person name="Quaggio R.B."/>
            <person name="Monteiro-Vitorello C.B."/>
            <person name="Van Sluys M.A."/>
            <person name="Almeida N.F. Jr."/>
            <person name="Alves L.M.C."/>
            <person name="do Amaral A.M."/>
            <person name="Bertolini M.C."/>
            <person name="Camargo L.E.A."/>
            <person name="Camarotte G."/>
            <person name="Cannavan F."/>
            <person name="Cardozo J."/>
            <person name="Chambergo F."/>
            <person name="Ciapina L.P."/>
            <person name="Cicarelli R.M.B."/>
            <person name="Coutinho L.L."/>
            <person name="Cursino-Santos J.R."/>
            <person name="El-Dorry H."/>
            <person name="Faria J.B."/>
            <person name="Ferreira A.J.S."/>
            <person name="Ferreira R.C.C."/>
            <person name="Ferro M.I.T."/>
            <person name="Formighieri E.F."/>
            <person name="Franco M.C."/>
            <person name="Greggio C.C."/>
            <person name="Gruber A."/>
            <person name="Katsuyama A.M."/>
            <person name="Kishi L.T."/>
            <person name="Leite R.P."/>
            <person name="Lemos E.G.M."/>
            <person name="Lemos M.V.F."/>
            <person name="Locali E.C."/>
            <person name="Machado M.A."/>
            <person name="Madeira A.M.B.N."/>
            <person name="Martinez-Rossi N.M."/>
            <person name="Martins E.C."/>
            <person name="Meidanis J."/>
            <person name="Menck C.F.M."/>
            <person name="Miyaki C.Y."/>
            <person name="Moon D.H."/>
            <person name="Moreira L.M."/>
            <person name="Novo M.T.M."/>
            <person name="Okura V.K."/>
            <person name="Oliveira M.C."/>
            <person name="Oliveira V.R."/>
            <person name="Pereira H.A."/>
            <person name="Rossi A."/>
            <person name="Sena J.A.D."/>
            <person name="Silva C."/>
            <person name="de Souza R.F."/>
            <person name="Spinola L.A.F."/>
            <person name="Takita M.A."/>
            <person name="Tamura R.E."/>
            <person name="Teixeira E.C."/>
            <person name="Tezza R.I.D."/>
            <person name="Trindade dos Santos M."/>
            <person name="Truffi D."/>
            <person name="Tsai S.M."/>
            <person name="White F.F."/>
            <person name="Setubal J.C."/>
            <person name="Kitajima J.P."/>
        </authorList>
    </citation>
    <scope>NUCLEOTIDE SEQUENCE [LARGE SCALE GENOMIC DNA]</scope>
    <source>
        <strain>ATCC 33913 / DSM 3586 / NCPPB 528 / LMG 568 / P 25</strain>
    </source>
</reference>
<proteinExistence type="inferred from homology"/>
<name>GLGB2_XANCP</name>
<dbReference type="EC" id="2.4.1.18"/>
<dbReference type="EMBL" id="AE008922">
    <property type="protein sequence ID" value="AAM39727.1"/>
    <property type="molecule type" value="Genomic_DNA"/>
</dbReference>
<dbReference type="RefSeq" id="NP_635803.1">
    <property type="nucleotide sequence ID" value="NC_003902.1"/>
</dbReference>
<dbReference type="RefSeq" id="WP_011035662.1">
    <property type="nucleotide sequence ID" value="NC_003902.1"/>
</dbReference>
<dbReference type="SMR" id="Q8PDD1"/>
<dbReference type="STRING" id="190485.XCC0409"/>
<dbReference type="CAZy" id="CBM48">
    <property type="family name" value="Carbohydrate-Binding Module Family 48"/>
</dbReference>
<dbReference type="CAZy" id="GH13">
    <property type="family name" value="Glycoside Hydrolase Family 13"/>
</dbReference>
<dbReference type="EnsemblBacteria" id="AAM39727">
    <property type="protein sequence ID" value="AAM39727"/>
    <property type="gene ID" value="XCC0409"/>
</dbReference>
<dbReference type="KEGG" id="xcc:XCC0409"/>
<dbReference type="PATRIC" id="fig|190485.4.peg.449"/>
<dbReference type="eggNOG" id="COG0296">
    <property type="taxonomic scope" value="Bacteria"/>
</dbReference>
<dbReference type="HOGENOM" id="CLU_004245_3_2_6"/>
<dbReference type="OrthoDB" id="9800174at2"/>
<dbReference type="UniPathway" id="UPA00164"/>
<dbReference type="Proteomes" id="UP000001010">
    <property type="component" value="Chromosome"/>
</dbReference>
<dbReference type="GO" id="GO:0005737">
    <property type="term" value="C:cytoplasm"/>
    <property type="evidence" value="ECO:0000318"/>
    <property type="project" value="GO_Central"/>
</dbReference>
<dbReference type="GO" id="GO:0005829">
    <property type="term" value="C:cytosol"/>
    <property type="evidence" value="ECO:0000318"/>
    <property type="project" value="GO_Central"/>
</dbReference>
<dbReference type="GO" id="GO:0003844">
    <property type="term" value="F:1,4-alpha-glucan branching enzyme activity"/>
    <property type="evidence" value="ECO:0000318"/>
    <property type="project" value="GO_Central"/>
</dbReference>
<dbReference type="GO" id="GO:0043169">
    <property type="term" value="F:cation binding"/>
    <property type="evidence" value="ECO:0007669"/>
    <property type="project" value="InterPro"/>
</dbReference>
<dbReference type="GO" id="GO:0004553">
    <property type="term" value="F:hydrolase activity, hydrolyzing O-glycosyl compounds"/>
    <property type="evidence" value="ECO:0007669"/>
    <property type="project" value="InterPro"/>
</dbReference>
<dbReference type="GO" id="GO:0005978">
    <property type="term" value="P:glycogen biosynthetic process"/>
    <property type="evidence" value="ECO:0000318"/>
    <property type="project" value="GO_Central"/>
</dbReference>
<dbReference type="CDD" id="cd11322">
    <property type="entry name" value="AmyAc_Glg_BE"/>
    <property type="match status" value="1"/>
</dbReference>
<dbReference type="CDD" id="cd02855">
    <property type="entry name" value="E_set_GBE_prok_N"/>
    <property type="match status" value="1"/>
</dbReference>
<dbReference type="FunFam" id="2.60.40.1180:FF:000002">
    <property type="entry name" value="1,4-alpha-glucan branching enzyme GlgB"/>
    <property type="match status" value="1"/>
</dbReference>
<dbReference type="FunFam" id="3.20.20.80:FF:000003">
    <property type="entry name" value="1,4-alpha-glucan branching enzyme GlgB"/>
    <property type="match status" value="1"/>
</dbReference>
<dbReference type="Gene3D" id="3.20.20.80">
    <property type="entry name" value="Glycosidases"/>
    <property type="match status" value="1"/>
</dbReference>
<dbReference type="Gene3D" id="2.60.40.1180">
    <property type="entry name" value="Golgi alpha-mannosidase II"/>
    <property type="match status" value="1"/>
</dbReference>
<dbReference type="Gene3D" id="2.60.40.10">
    <property type="entry name" value="Immunoglobulins"/>
    <property type="match status" value="2"/>
</dbReference>
<dbReference type="HAMAP" id="MF_00685">
    <property type="entry name" value="GlgB"/>
    <property type="match status" value="1"/>
</dbReference>
<dbReference type="InterPro" id="IPR006048">
    <property type="entry name" value="A-amylase/branching_C"/>
</dbReference>
<dbReference type="InterPro" id="IPR037439">
    <property type="entry name" value="Branching_enzy"/>
</dbReference>
<dbReference type="InterPro" id="IPR006407">
    <property type="entry name" value="GlgB"/>
</dbReference>
<dbReference type="InterPro" id="IPR054169">
    <property type="entry name" value="GlgB_N"/>
</dbReference>
<dbReference type="InterPro" id="IPR044143">
    <property type="entry name" value="GlgB_N_E_set_prok"/>
</dbReference>
<dbReference type="InterPro" id="IPR006047">
    <property type="entry name" value="Glyco_hydro_13_cat_dom"/>
</dbReference>
<dbReference type="InterPro" id="IPR004193">
    <property type="entry name" value="Glyco_hydro_13_N"/>
</dbReference>
<dbReference type="InterPro" id="IPR013780">
    <property type="entry name" value="Glyco_hydro_b"/>
</dbReference>
<dbReference type="InterPro" id="IPR017853">
    <property type="entry name" value="Glycoside_hydrolase_SF"/>
</dbReference>
<dbReference type="InterPro" id="IPR013783">
    <property type="entry name" value="Ig-like_fold"/>
</dbReference>
<dbReference type="InterPro" id="IPR014756">
    <property type="entry name" value="Ig_E-set"/>
</dbReference>
<dbReference type="NCBIfam" id="TIGR01515">
    <property type="entry name" value="branching_enzym"/>
    <property type="match status" value="1"/>
</dbReference>
<dbReference type="NCBIfam" id="NF003811">
    <property type="entry name" value="PRK05402.1"/>
    <property type="match status" value="1"/>
</dbReference>
<dbReference type="NCBIfam" id="NF008967">
    <property type="entry name" value="PRK12313.1"/>
    <property type="match status" value="1"/>
</dbReference>
<dbReference type="NCBIfam" id="NF009221">
    <property type="entry name" value="PRK12568.1"/>
    <property type="match status" value="1"/>
</dbReference>
<dbReference type="PANTHER" id="PTHR43651">
    <property type="entry name" value="1,4-ALPHA-GLUCAN-BRANCHING ENZYME"/>
    <property type="match status" value="1"/>
</dbReference>
<dbReference type="PANTHER" id="PTHR43651:SF3">
    <property type="entry name" value="1,4-ALPHA-GLUCAN-BRANCHING ENZYME"/>
    <property type="match status" value="1"/>
</dbReference>
<dbReference type="Pfam" id="PF00128">
    <property type="entry name" value="Alpha-amylase"/>
    <property type="match status" value="1"/>
</dbReference>
<dbReference type="Pfam" id="PF02806">
    <property type="entry name" value="Alpha-amylase_C"/>
    <property type="match status" value="1"/>
</dbReference>
<dbReference type="Pfam" id="PF02922">
    <property type="entry name" value="CBM_48"/>
    <property type="match status" value="1"/>
</dbReference>
<dbReference type="Pfam" id="PF22019">
    <property type="entry name" value="GlgB_N"/>
    <property type="match status" value="1"/>
</dbReference>
<dbReference type="PIRSF" id="PIRSF000463">
    <property type="entry name" value="GlgB"/>
    <property type="match status" value="1"/>
</dbReference>
<dbReference type="SMART" id="SM00642">
    <property type="entry name" value="Aamy"/>
    <property type="match status" value="1"/>
</dbReference>
<dbReference type="SUPFAM" id="SSF51445">
    <property type="entry name" value="(Trans)glycosidases"/>
    <property type="match status" value="1"/>
</dbReference>
<dbReference type="SUPFAM" id="SSF81296">
    <property type="entry name" value="E set domains"/>
    <property type="match status" value="1"/>
</dbReference>
<dbReference type="SUPFAM" id="SSF51011">
    <property type="entry name" value="Glycosyl hydrolase domain"/>
    <property type="match status" value="1"/>
</dbReference>
<evidence type="ECO:0000250" key="1"/>
<evidence type="ECO:0000305" key="2"/>
<accession>Q8PDD1</accession>
<organism>
    <name type="scientific">Xanthomonas campestris pv. campestris (strain ATCC 33913 / DSM 3586 / NCPPB 528 / LMG 568 / P 25)</name>
    <dbReference type="NCBI Taxonomy" id="190485"/>
    <lineage>
        <taxon>Bacteria</taxon>
        <taxon>Pseudomonadati</taxon>
        <taxon>Pseudomonadota</taxon>
        <taxon>Gammaproteobacteria</taxon>
        <taxon>Lysobacterales</taxon>
        <taxon>Lysobacteraceae</taxon>
        <taxon>Xanthomonas</taxon>
    </lineage>
</organism>
<sequence>MAEGGGGSAVALQDLQAIAAGLPGDAFAVLGPHVQADGRLRVRVLAPGAEALGLIDGRGKLLARMQASPIDGVFEGELPADAAYRLRIVWPDVVQEIEDPYAFAPQIDESALLQIGAGDGQALRANLGARHVQVGELPAVRFAVWAPHAQRVAVVGDFNGWEPRRHPMRQRSGGIWELVLPRVETGARYKYAIITADGRVLLKADPVARQSELPPATASVVASADAFAWTDAEWMARRSAAAEPAPLSIYEVHAASWRRDGHDQPLDWVSLAAQLIPYVQELGFTHIELLPITEHPFGGSWGYQPLGLYAPTARHGSPDGFAQFVDACHRAGIGVILDWVSAHFPDDAHGLSQFDGSATYEHADPREGMHRDWNTLIYNYGRPEVTAYLLGSAMEWIAHYHLDGLRVDAVASMLYRDYGRAEGEWVPNAHGGRENLEAVAFLRQLTGEIASQFPGVLTIAEESTAWPGVTAPISEGGLGFTHKWNMGWMHDTLHYMQRDPAARAQHHSQLTFGLVYAFSERFVLPLSHDEVVHGTGGLLGQMPGDDWRRFANLRAYLALMWAHPGDKLLFMGAEFGQWADWNHDRSLDWHLLDHAPHRGMQQLVRDLNRALRRVPALYRGNHRADGFEWSVADDARNSVLAFIRHDPDGGAPLLAVSNLTPQPHHDYRVGVPRAGGWREILNTDSAHYGGSNLGNGGRLLTEPTGMHGHAQSLRLTLPPLATIYLQAEK</sequence>
<protein>
    <recommendedName>
        <fullName>1,4-alpha-glucan branching enzyme GlgB 2</fullName>
        <ecNumber>2.4.1.18</ecNumber>
    </recommendedName>
    <alternativeName>
        <fullName>1,4-alpha-D-glucan:1,4-alpha-D-glucan 6-glucosyl-transferase 2</fullName>
    </alternativeName>
    <alternativeName>
        <fullName>Alpha-(1-&gt;4)-glucan branching enzyme 2</fullName>
    </alternativeName>
    <alternativeName>
        <fullName>Glycogen branching enzyme 2</fullName>
        <shortName>BE 2</shortName>
    </alternativeName>
</protein>
<gene>
    <name type="primary">glgB2</name>
    <name type="ordered locus">XCC0409</name>
</gene>